<proteinExistence type="predicted"/>
<feature type="chain" id="PRO_0000066398" description="Uncharacterized plasmid pDG1 103 kDa protein">
    <location>
        <begin position="1"/>
        <end position="906"/>
    </location>
</feature>
<feature type="region of interest" description="Disordered" evidence="1">
    <location>
        <begin position="231"/>
        <end position="322"/>
    </location>
</feature>
<feature type="region of interest" description="Disordered" evidence="1">
    <location>
        <begin position="865"/>
        <end position="906"/>
    </location>
</feature>
<feature type="compositionally biased region" description="Low complexity" evidence="1">
    <location>
        <begin position="236"/>
        <end position="250"/>
    </location>
</feature>
<feature type="compositionally biased region" description="Pro residues" evidence="1">
    <location>
        <begin position="264"/>
        <end position="281"/>
    </location>
</feature>
<feature type="compositionally biased region" description="Polar residues" evidence="1">
    <location>
        <begin position="302"/>
        <end position="314"/>
    </location>
</feature>
<feature type="compositionally biased region" description="Acidic residues" evidence="1">
    <location>
        <begin position="867"/>
        <end position="906"/>
    </location>
</feature>
<accession>P10511</accession>
<dbReference type="EMBL" id="X13703">
    <property type="protein sequence ID" value="CAA31988.1"/>
    <property type="molecule type" value="Genomic_DNA"/>
</dbReference>
<dbReference type="PIR" id="S03313">
    <property type="entry name" value="S03313"/>
</dbReference>
<dbReference type="SMR" id="P10511"/>
<dbReference type="InterPro" id="IPR007778">
    <property type="entry name" value="Dict_REP"/>
</dbReference>
<dbReference type="Pfam" id="PF05086">
    <property type="entry name" value="Dicty_REP"/>
    <property type="match status" value="1"/>
</dbReference>
<dbReference type="PIRSF" id="PIRSF018468">
    <property type="entry name" value="Dict_REP"/>
    <property type="match status" value="1"/>
</dbReference>
<geneLocation type="plasmid">
    <name>pDG1</name>
</geneLocation>
<protein>
    <recommendedName>
        <fullName>Uncharacterized plasmid pDG1 103 kDa protein</fullName>
    </recommendedName>
</protein>
<evidence type="ECO:0000256" key="1">
    <source>
        <dbReference type="SAM" id="MobiDB-lite"/>
    </source>
</evidence>
<reference key="1">
    <citation type="journal article" date="1989" name="Nucleic Acids Res.">
        <title>Sequence organization and gene expression of pGD1, a plasmid found in a wild isolate of Dictyostelium.</title>
        <authorList>
            <person name="Orii H."/>
            <person name="Tanaka Y."/>
            <person name="Yanagisawa K."/>
        </authorList>
    </citation>
    <scope>NUCLEOTIDE SEQUENCE [GENOMIC DNA]</scope>
</reference>
<name>YPG1_DICSP</name>
<organism>
    <name type="scientific">Dictyostelium sp. (strain GA11)</name>
    <name type="common">Slime mold</name>
    <dbReference type="NCBI Taxonomy" id="5785"/>
    <lineage>
        <taxon>Eukaryota</taxon>
        <taxon>Amoebozoa</taxon>
        <taxon>Evosea</taxon>
        <taxon>Eumycetozoa</taxon>
        <taxon>Dictyostelia</taxon>
        <taxon>Dictyosteliales</taxon>
        <taxon>Dictyosteliaceae</taxon>
        <taxon>Dictyostelium</taxon>
    </lineage>
</organism>
<comment type="miscellaneous">
    <text>The expression of this protein is suppressed by cAMP.</text>
</comment>
<keyword id="KW-0614">Plasmid</keyword>
<sequence length="906" mass="103044">MQNLAPWESFFMFVNILLRDYEPVKRRQQGSESNEVMKYSFTVDTLICRELFRSILKEKTLGILGDYLNRECIFERTKKLVKLNYNDDEYDYDLDDILKIRKNSSGKLIVDDIDQAIFIIDHLSRKVDCKVFTKKSLVGFRHIEKTITEAGYKIRERRSIGLDWYTLLNDIRTSCAKHRTFVAFSKYRYVDFIAMLTAFHQVKAAKSNEEEHLSTIYSLYPFVEHNFDEDKEDAATTKQTTTTTTTTPQTRTRKRQATGDNTPTPTPAPAPKPTTPKPTPAPRKISSRKNGGLTNVRVDHISVNNIPTPSDTNESLSPPSTIISSSNSIKQCLVEVLESKGEISIDKIKSIFNCLQNKQYTGDLIDSMFQQNKSEKVITISSKLFNMSNKVDYDEINFAKLKDDILYLSRRLIYEKNTNLLIPTEEGEGIIGFLWLPVVNGALTASVYVSQLGADVDFKKISATVRFVQLCISMSDIIGFMELRSLSLDAFRSIANELLYMSDRILNLEADLRTLKDIVMKPTNLKKHVNVDNLFSRLSPEGSNGFANYLYDFISNHPYIKIDKSQNSIKLKETPNPVLVLTYDPKVVEHKVGFLFHCRSEISRFNAGGNKFILNNIQHSFTPNNIGVLSQDRENDLKRNYSMLTSNTSKLITGTGSGEHNLERFISITINNTAYDLIRVVLFRDISNGISISNLRDIFRENSDNRNRYLEYLGKSRLIRVFFIAPCLIQILEVNFAATQLTADKNFNRAIKSIKIRNLSYITIDIIVGGNVIDSIRGDATQVVQINASEFSFSVSCLKFSVSATLVSKKNLQNISTIVLNKYNEEKSYLQCVKKFSKLSKSFIRKFTGMNININALEELLLSEAGAYEDDDDDEGEGNEDDEDNDENEDEDEGEGEGDSSEDEDE</sequence>